<feature type="chain" id="PRO_0000245530" description="Transcription initiation factor TFIID subunit 3">
    <location>
        <begin position="1"/>
        <end position="930"/>
    </location>
</feature>
<feature type="zinc finger region" description="PHD-type" evidence="3">
    <location>
        <begin position="866"/>
        <end position="916"/>
    </location>
</feature>
<feature type="region of interest" description="Disordered" evidence="4">
    <location>
        <begin position="128"/>
        <end position="151"/>
    </location>
</feature>
<feature type="region of interest" description="Disordered" evidence="4">
    <location>
        <begin position="175"/>
        <end position="381"/>
    </location>
</feature>
<feature type="region of interest" description="Disordered" evidence="4">
    <location>
        <begin position="404"/>
        <end position="507"/>
    </location>
</feature>
<feature type="region of interest" description="Disordered" evidence="4">
    <location>
        <begin position="519"/>
        <end position="578"/>
    </location>
</feature>
<feature type="region of interest" description="Disordered" evidence="4">
    <location>
        <begin position="599"/>
        <end position="755"/>
    </location>
</feature>
<feature type="region of interest" description="Disordered" evidence="4">
    <location>
        <begin position="782"/>
        <end position="820"/>
    </location>
</feature>
<feature type="compositionally biased region" description="Low complexity" evidence="4">
    <location>
        <begin position="274"/>
        <end position="291"/>
    </location>
</feature>
<feature type="compositionally biased region" description="Polar residues" evidence="4">
    <location>
        <begin position="428"/>
        <end position="446"/>
    </location>
</feature>
<feature type="compositionally biased region" description="Low complexity" evidence="4">
    <location>
        <begin position="448"/>
        <end position="462"/>
    </location>
</feature>
<feature type="compositionally biased region" description="Polar residues" evidence="4">
    <location>
        <begin position="482"/>
        <end position="494"/>
    </location>
</feature>
<feature type="compositionally biased region" description="Basic residues" evidence="4">
    <location>
        <begin position="525"/>
        <end position="539"/>
    </location>
</feature>
<feature type="compositionally biased region" description="Basic and acidic residues" evidence="4">
    <location>
        <begin position="540"/>
        <end position="578"/>
    </location>
</feature>
<feature type="compositionally biased region" description="Basic and acidic residues" evidence="4">
    <location>
        <begin position="599"/>
        <end position="612"/>
    </location>
</feature>
<feature type="compositionally biased region" description="Basic and acidic residues" evidence="4">
    <location>
        <begin position="621"/>
        <end position="648"/>
    </location>
</feature>
<feature type="compositionally biased region" description="Low complexity" evidence="4">
    <location>
        <begin position="674"/>
        <end position="686"/>
    </location>
</feature>
<feature type="compositionally biased region" description="Basic and acidic residues" evidence="4">
    <location>
        <begin position="688"/>
        <end position="699"/>
    </location>
</feature>
<feature type="compositionally biased region" description="Basic residues" evidence="4">
    <location>
        <begin position="700"/>
        <end position="711"/>
    </location>
</feature>
<feature type="compositionally biased region" description="Basic and acidic residues" evidence="4">
    <location>
        <begin position="712"/>
        <end position="737"/>
    </location>
</feature>
<feature type="compositionally biased region" description="Pro residues" evidence="4">
    <location>
        <begin position="793"/>
        <end position="820"/>
    </location>
</feature>
<gene>
    <name type="primary">TAF3</name>
    <name type="ORF">RCJMB04_2c9</name>
</gene>
<protein>
    <recommendedName>
        <fullName>Transcription initiation factor TFIID subunit 3</fullName>
    </recommendedName>
    <alternativeName>
        <fullName>TBP-associated factor 3</fullName>
    </alternativeName>
</protein>
<name>TAF3_CHICK</name>
<evidence type="ECO:0000250" key="1"/>
<evidence type="ECO:0000250" key="2">
    <source>
        <dbReference type="UniProtKB" id="Q5VWG9"/>
    </source>
</evidence>
<evidence type="ECO:0000255" key="3">
    <source>
        <dbReference type="PROSITE-ProRule" id="PRU00146"/>
    </source>
</evidence>
<evidence type="ECO:0000256" key="4">
    <source>
        <dbReference type="SAM" id="MobiDB-lite"/>
    </source>
</evidence>
<evidence type="ECO:0000305" key="5"/>
<sequence length="930" mass="103181">MCETYSRWLLRVSVAQICQALGWDSVQVSACDLLTDVLQRYLQGLGRGCHRYCELYGRTDPILDDVGDAFKLMGVNLHELEDYIHNIEPVTFAHQIPSFPVSKNNVLQFPQPGSKDAEERKEYIPDYMPPIVSSQEEEEEEQVPTDGGTSAEAMQVPLEEEGDMEEDEAINDENYLSKRPLESPDAEEFPPMKRPKLSVSKGDALDGALEPREPLSSINTQKVPPMLSPVHVQDSTDLAPPSPEPPMLAPIAKSQVPTPKTLESKPPAPKTKSKTSSPGQKTKSPKTTPSPVVAGSPIRSPKTGSKEKKSPGRAKSPKSPKSPKAPVHVPPPPVKPETPSRTPLAALSDKIGKENIQVKQGQTPPEPVTKPNIENQTKKLPVVDKTIDDSIDAVIARACAEREPDPFEFSSGSESEGEIFTSPKRLSVSETTATTPKPSVSTNCSNKAGATPVPPSGGTSSSDISWTMDDSIDEVIRKANMGTPSNPPANFTYFSSPSASPPTPEPLLKVYEEKTKLASSVEVKKKLKKELKTKMKKKEKQKEKDKEKSKEKNKEKEKNKEKDKDKEGNKEAKFQWKELLKDDEHDPYKFKLKDFEDADTKVKLKDGNTKKEKEKHKDKKKEKEKGKKDKDKKDKEKVKDKSKEDKIKPPSAPLVLPPKEMSLPLFSTPTAMRLPSMLPSLSPMLPEKLFEDKEKPKEKKKDKKEKKKKKEREKDKEKEKKDKEKERKEREKKEKEKEKHKHEKIKVEPVVPAPSPVIPRLTLRVGAGQDKIVISKVVPAPEAKPATPVSRPKTPPPVPSPVPAPVHVTPPPAPVPAPPQPTVSPALLPPASPAVSAAGGSKAPVRSVVTETVSTYVIRDEWGNQIWFCPGCNKPDDGSPMIGCDDCDDWYHWPCVGITAAPPEEMQWFCSKCANKKKDKKHKKRKHRAH</sequence>
<accession>Q5F489</accession>
<dbReference type="EMBL" id="AJ851411">
    <property type="protein sequence ID" value="CAH65045.1"/>
    <property type="molecule type" value="mRNA"/>
</dbReference>
<dbReference type="RefSeq" id="NP_001026012.1">
    <property type="nucleotide sequence ID" value="NM_001030841.2"/>
</dbReference>
<dbReference type="SMR" id="Q5F489"/>
<dbReference type="FunCoup" id="Q5F489">
    <property type="interactions" value="1737"/>
</dbReference>
<dbReference type="STRING" id="9031.ENSGALP00000010875"/>
<dbReference type="GlyGen" id="Q5F489">
    <property type="glycosylation" value="3 sites"/>
</dbReference>
<dbReference type="PaxDb" id="9031-ENSGALP00000010875"/>
<dbReference type="GeneID" id="419107"/>
<dbReference type="KEGG" id="gga:419107"/>
<dbReference type="CTD" id="83860"/>
<dbReference type="VEuPathDB" id="HostDB:geneid_419107"/>
<dbReference type="eggNOG" id="KOG1973">
    <property type="taxonomic scope" value="Eukaryota"/>
</dbReference>
<dbReference type="eggNOG" id="KOG2389">
    <property type="taxonomic scope" value="Eukaryota"/>
</dbReference>
<dbReference type="InParanoid" id="Q5F489"/>
<dbReference type="OrthoDB" id="436852at2759"/>
<dbReference type="PhylomeDB" id="Q5F489"/>
<dbReference type="PRO" id="PR:Q5F489"/>
<dbReference type="Proteomes" id="UP000000539">
    <property type="component" value="Unassembled WGS sequence"/>
</dbReference>
<dbReference type="GO" id="GO:0005669">
    <property type="term" value="C:transcription factor TFIID complex"/>
    <property type="evidence" value="ECO:0000318"/>
    <property type="project" value="GO_Central"/>
</dbReference>
<dbReference type="GO" id="GO:0002039">
    <property type="term" value="F:p53 binding"/>
    <property type="evidence" value="ECO:0000318"/>
    <property type="project" value="GO_Central"/>
</dbReference>
<dbReference type="GO" id="GO:0046982">
    <property type="term" value="F:protein heterodimerization activity"/>
    <property type="evidence" value="ECO:0007669"/>
    <property type="project" value="InterPro"/>
</dbReference>
<dbReference type="GO" id="GO:0008270">
    <property type="term" value="F:zinc ion binding"/>
    <property type="evidence" value="ECO:0007669"/>
    <property type="project" value="UniProtKB-KW"/>
</dbReference>
<dbReference type="GO" id="GO:0045944">
    <property type="term" value="P:positive regulation of transcription by RNA polymerase II"/>
    <property type="evidence" value="ECO:0000318"/>
    <property type="project" value="GO_Central"/>
</dbReference>
<dbReference type="CDD" id="cd22916">
    <property type="entry name" value="HFD_TAF3"/>
    <property type="match status" value="1"/>
</dbReference>
<dbReference type="CDD" id="cd15522">
    <property type="entry name" value="PHD_TAF3"/>
    <property type="match status" value="1"/>
</dbReference>
<dbReference type="FunFam" id="1.10.20.10:FF:000056">
    <property type="entry name" value="Transcription initiation factor TFIID subunit 3"/>
    <property type="match status" value="1"/>
</dbReference>
<dbReference type="FunFam" id="3.30.40.10:FF:000317">
    <property type="entry name" value="transcription initiation factor TFIID subunit 3"/>
    <property type="match status" value="1"/>
</dbReference>
<dbReference type="Gene3D" id="1.10.20.10">
    <property type="entry name" value="Histone, subunit A"/>
    <property type="match status" value="1"/>
</dbReference>
<dbReference type="Gene3D" id="3.30.40.10">
    <property type="entry name" value="Zinc/RING finger domain, C3HC4 (zinc finger)"/>
    <property type="match status" value="1"/>
</dbReference>
<dbReference type="InterPro" id="IPR006565">
    <property type="entry name" value="BTP"/>
</dbReference>
<dbReference type="InterPro" id="IPR009072">
    <property type="entry name" value="Histone-fold"/>
</dbReference>
<dbReference type="InterPro" id="IPR019786">
    <property type="entry name" value="Zinc_finger_PHD-type_CS"/>
</dbReference>
<dbReference type="InterPro" id="IPR011011">
    <property type="entry name" value="Znf_FYVE_PHD"/>
</dbReference>
<dbReference type="InterPro" id="IPR001965">
    <property type="entry name" value="Znf_PHD"/>
</dbReference>
<dbReference type="InterPro" id="IPR019787">
    <property type="entry name" value="Znf_PHD-finger"/>
</dbReference>
<dbReference type="InterPro" id="IPR013083">
    <property type="entry name" value="Znf_RING/FYVE/PHD"/>
</dbReference>
<dbReference type="PANTHER" id="PTHR46452">
    <property type="entry name" value="TRANSCRIPTION INITIATION FACTOR TFIID SUBUNIT 3"/>
    <property type="match status" value="1"/>
</dbReference>
<dbReference type="PANTHER" id="PTHR46452:SF1">
    <property type="entry name" value="TRANSCRIPTION INITIATION FACTOR TFIID SUBUNIT 3"/>
    <property type="match status" value="1"/>
</dbReference>
<dbReference type="Pfam" id="PF07524">
    <property type="entry name" value="Bromo_TP"/>
    <property type="match status" value="1"/>
</dbReference>
<dbReference type="Pfam" id="PF00628">
    <property type="entry name" value="PHD"/>
    <property type="match status" value="1"/>
</dbReference>
<dbReference type="SMART" id="SM00576">
    <property type="entry name" value="BTP"/>
    <property type="match status" value="1"/>
</dbReference>
<dbReference type="SMART" id="SM00249">
    <property type="entry name" value="PHD"/>
    <property type="match status" value="1"/>
</dbReference>
<dbReference type="SUPFAM" id="SSF57903">
    <property type="entry name" value="FYVE/PHD zinc finger"/>
    <property type="match status" value="1"/>
</dbReference>
<dbReference type="PROSITE" id="PS01359">
    <property type="entry name" value="ZF_PHD_1"/>
    <property type="match status" value="1"/>
</dbReference>
<dbReference type="PROSITE" id="PS50016">
    <property type="entry name" value="ZF_PHD_2"/>
    <property type="match status" value="1"/>
</dbReference>
<proteinExistence type="evidence at transcript level"/>
<comment type="function">
    <text evidence="2">The TFIID basal transcription factor complex plays a major role in the initiation of RNA polymerase II (Pol II)-dependent transcription. TFIID recognizes and binds promoters with or without a TATA box via its subunit TBP, a TATA-box-binding protein, and promotes assembly of the pre-initiation complex (PIC). The TFIID complex consists of TBP and TBP-associated factors (TAFs), including TAF1, TAF2, TAF3, TAF4, TAF5, TAF6, TAF7, TAF8, TAF9, TAF10, TAF11, TAF12 and TAF13. The TFIID complex structure can be divided into 3 modules TFIID-A, TFIID-B, and TFIID-C. TAF3 forms the TFIID-A module together with TAF5 and TBP. Required in complex with TBPL2 for the differentiation of myoblasts into myocytes. The TAF3-TBPL2 complex replaces TFIID at specific promoters at an early stage in the differentiation process.</text>
</comment>
<comment type="subunit">
    <text evidence="2">Component of the TFIID basal transcription factor complex, composed of TATA-box-binding protein TBP, and a number of TBP-associated factors (TAFs), including TAF1, TAF2, TAF3, TAF4, TAF5, TAF6, TAF7, TAF8, TAF9, TAF10, TAF11, TAF12 and TAF13. Interacts with TAF10 via the histone fold. Interacts with TAF13, TBP, SAP130 and GCN5L2. Interacts with TBPL2.</text>
</comment>
<comment type="subcellular location">
    <subcellularLocation>
        <location evidence="1">Nucleus</location>
    </subcellularLocation>
</comment>
<comment type="similarity">
    <text evidence="5">Belongs to the TAF3 family.</text>
</comment>
<organism>
    <name type="scientific">Gallus gallus</name>
    <name type="common">Chicken</name>
    <dbReference type="NCBI Taxonomy" id="9031"/>
    <lineage>
        <taxon>Eukaryota</taxon>
        <taxon>Metazoa</taxon>
        <taxon>Chordata</taxon>
        <taxon>Craniata</taxon>
        <taxon>Vertebrata</taxon>
        <taxon>Euteleostomi</taxon>
        <taxon>Archelosauria</taxon>
        <taxon>Archosauria</taxon>
        <taxon>Dinosauria</taxon>
        <taxon>Saurischia</taxon>
        <taxon>Theropoda</taxon>
        <taxon>Coelurosauria</taxon>
        <taxon>Aves</taxon>
        <taxon>Neognathae</taxon>
        <taxon>Galloanserae</taxon>
        <taxon>Galliformes</taxon>
        <taxon>Phasianidae</taxon>
        <taxon>Phasianinae</taxon>
        <taxon>Gallus</taxon>
    </lineage>
</organism>
<reference key="1">
    <citation type="journal article" date="2005" name="Genome Biol.">
        <title>Full-length cDNAs from chicken bursal lymphocytes to facilitate gene function analysis.</title>
        <authorList>
            <person name="Caldwell R.B."/>
            <person name="Kierzek A.M."/>
            <person name="Arakawa H."/>
            <person name="Bezzubov Y."/>
            <person name="Zaim J."/>
            <person name="Fiedler P."/>
            <person name="Kutter S."/>
            <person name="Blagodatski A."/>
            <person name="Kostovska D."/>
            <person name="Koter M."/>
            <person name="Plachy J."/>
            <person name="Carninci P."/>
            <person name="Hayashizaki Y."/>
            <person name="Buerstedde J.-M."/>
        </authorList>
    </citation>
    <scope>NUCLEOTIDE SEQUENCE [LARGE SCALE MRNA]</scope>
    <source>
        <strain>CB</strain>
        <tissue>Bursa of Fabricius</tissue>
    </source>
</reference>
<keyword id="KW-0479">Metal-binding</keyword>
<keyword id="KW-0539">Nucleus</keyword>
<keyword id="KW-1185">Reference proteome</keyword>
<keyword id="KW-0804">Transcription</keyword>
<keyword id="KW-0805">Transcription regulation</keyword>
<keyword id="KW-0862">Zinc</keyword>
<keyword id="KW-0863">Zinc-finger</keyword>